<gene>
    <name evidence="1" type="primary">guaA</name>
    <name type="ordered locus">ECSE_2793</name>
</gene>
<proteinExistence type="inferred from homology"/>
<comment type="function">
    <text evidence="1">Catalyzes the synthesis of GMP from XMP.</text>
</comment>
<comment type="catalytic activity">
    <reaction evidence="1">
        <text>XMP + L-glutamine + ATP + H2O = GMP + L-glutamate + AMP + diphosphate + 2 H(+)</text>
        <dbReference type="Rhea" id="RHEA:11680"/>
        <dbReference type="ChEBI" id="CHEBI:15377"/>
        <dbReference type="ChEBI" id="CHEBI:15378"/>
        <dbReference type="ChEBI" id="CHEBI:29985"/>
        <dbReference type="ChEBI" id="CHEBI:30616"/>
        <dbReference type="ChEBI" id="CHEBI:33019"/>
        <dbReference type="ChEBI" id="CHEBI:57464"/>
        <dbReference type="ChEBI" id="CHEBI:58115"/>
        <dbReference type="ChEBI" id="CHEBI:58359"/>
        <dbReference type="ChEBI" id="CHEBI:456215"/>
        <dbReference type="EC" id="6.3.5.2"/>
    </reaction>
</comment>
<comment type="pathway">
    <text evidence="1">Purine metabolism; GMP biosynthesis; GMP from XMP (L-Gln route): step 1/1.</text>
</comment>
<comment type="subunit">
    <text evidence="1">Homodimer.</text>
</comment>
<protein>
    <recommendedName>
        <fullName evidence="1">GMP synthase [glutamine-hydrolyzing]</fullName>
        <ecNumber evidence="1">6.3.5.2</ecNumber>
    </recommendedName>
    <alternativeName>
        <fullName evidence="1">GMP synthetase</fullName>
    </alternativeName>
    <alternativeName>
        <fullName evidence="1">Glutamine amidotransferase</fullName>
    </alternativeName>
</protein>
<reference key="1">
    <citation type="journal article" date="2008" name="DNA Res.">
        <title>Complete genome sequence and comparative analysis of the wild-type commensal Escherichia coli strain SE11 isolated from a healthy adult.</title>
        <authorList>
            <person name="Oshima K."/>
            <person name="Toh H."/>
            <person name="Ogura Y."/>
            <person name="Sasamoto H."/>
            <person name="Morita H."/>
            <person name="Park S.-H."/>
            <person name="Ooka T."/>
            <person name="Iyoda S."/>
            <person name="Taylor T.D."/>
            <person name="Hayashi T."/>
            <person name="Itoh K."/>
            <person name="Hattori M."/>
        </authorList>
    </citation>
    <scope>NUCLEOTIDE SEQUENCE [LARGE SCALE GENOMIC DNA]</scope>
    <source>
        <strain>SE11</strain>
    </source>
</reference>
<organism>
    <name type="scientific">Escherichia coli (strain SE11)</name>
    <dbReference type="NCBI Taxonomy" id="409438"/>
    <lineage>
        <taxon>Bacteria</taxon>
        <taxon>Pseudomonadati</taxon>
        <taxon>Pseudomonadota</taxon>
        <taxon>Gammaproteobacteria</taxon>
        <taxon>Enterobacterales</taxon>
        <taxon>Enterobacteriaceae</taxon>
        <taxon>Escherichia</taxon>
    </lineage>
</organism>
<feature type="chain" id="PRO_1000120289" description="GMP synthase [glutamine-hydrolyzing]">
    <location>
        <begin position="1"/>
        <end position="525"/>
    </location>
</feature>
<feature type="domain" description="Glutamine amidotransferase type-1" evidence="1">
    <location>
        <begin position="9"/>
        <end position="207"/>
    </location>
</feature>
<feature type="domain" description="GMPS ATP-PPase" evidence="1">
    <location>
        <begin position="208"/>
        <end position="400"/>
    </location>
</feature>
<feature type="active site" description="Nucleophile" evidence="1">
    <location>
        <position position="86"/>
    </location>
</feature>
<feature type="active site" evidence="1">
    <location>
        <position position="181"/>
    </location>
</feature>
<feature type="active site" evidence="1">
    <location>
        <position position="183"/>
    </location>
</feature>
<feature type="binding site" evidence="1">
    <location>
        <begin position="235"/>
        <end position="241"/>
    </location>
    <ligand>
        <name>ATP</name>
        <dbReference type="ChEBI" id="CHEBI:30616"/>
    </ligand>
</feature>
<name>GUAA_ECOSE</name>
<accession>B6I579</accession>
<keyword id="KW-0067">ATP-binding</keyword>
<keyword id="KW-0315">Glutamine amidotransferase</keyword>
<keyword id="KW-0332">GMP biosynthesis</keyword>
<keyword id="KW-0436">Ligase</keyword>
<keyword id="KW-0547">Nucleotide-binding</keyword>
<keyword id="KW-0658">Purine biosynthesis</keyword>
<sequence length="525" mass="58665">MTENIHKHRILILDFGSQYTQLVARRVRELGVYCELWAWDVTEAQIRDFNPSGIILSGGPESTTEENSPRAPQYVFEAGVPVFGVCYGMQTMAMQLGGHVEASNEREFGYAQVEVVNDSALVRGIEDALTADGKPLLDVWMSHGDKVTAIPSDFVTVASTESCPFAIMANEEKRFYGVQFHPEVTHTRQGMRMLERFVRDICQCEALWTPAKIIDDAVARIREQVGDDKVILGLSGGVDSSVTAMLLHRAIGKNLTCVFVDNGLLRLNEAEQVLDMFGDHFGLNIVHVPAEDRFLSALAGENDPEAKRKIIGRVFVEVFDEEALKLEDVKWLAQGTIYPDVIESAASATGKAHVIKSHHNVGGLPKEMKMGLVEPLKELFKDEVRKIGLELGLPYDMLYRHPFPGPGLGVRVLGEVKKEYCDLLRRADAIFIEELRKADLYDKVSQAFTVFLPVRSVGVMGDGRKYDWVVSLRAVETIDFMTAHWAHLPYDFLGRVSNRIINEVNGISRVVYDISGKPPATIEWE</sequence>
<dbReference type="EC" id="6.3.5.2" evidence="1"/>
<dbReference type="EMBL" id="AP009240">
    <property type="protein sequence ID" value="BAG78317.1"/>
    <property type="molecule type" value="Genomic_DNA"/>
</dbReference>
<dbReference type="RefSeq" id="WP_000138282.1">
    <property type="nucleotide sequence ID" value="NC_011415.1"/>
</dbReference>
<dbReference type="SMR" id="B6I579"/>
<dbReference type="MEROPS" id="C26.957"/>
<dbReference type="GeneID" id="75172615"/>
<dbReference type="KEGG" id="ecy:ECSE_2793"/>
<dbReference type="HOGENOM" id="CLU_014340_0_5_6"/>
<dbReference type="UniPathway" id="UPA00189">
    <property type="reaction ID" value="UER00296"/>
</dbReference>
<dbReference type="Proteomes" id="UP000008199">
    <property type="component" value="Chromosome"/>
</dbReference>
<dbReference type="GO" id="GO:0005829">
    <property type="term" value="C:cytosol"/>
    <property type="evidence" value="ECO:0007669"/>
    <property type="project" value="TreeGrafter"/>
</dbReference>
<dbReference type="GO" id="GO:0005524">
    <property type="term" value="F:ATP binding"/>
    <property type="evidence" value="ECO:0007669"/>
    <property type="project" value="UniProtKB-UniRule"/>
</dbReference>
<dbReference type="GO" id="GO:0003921">
    <property type="term" value="F:GMP synthase activity"/>
    <property type="evidence" value="ECO:0007669"/>
    <property type="project" value="InterPro"/>
</dbReference>
<dbReference type="CDD" id="cd01742">
    <property type="entry name" value="GATase1_GMP_Synthase"/>
    <property type="match status" value="1"/>
</dbReference>
<dbReference type="CDD" id="cd01997">
    <property type="entry name" value="GMP_synthase_C"/>
    <property type="match status" value="1"/>
</dbReference>
<dbReference type="FunFam" id="3.30.300.10:FF:000002">
    <property type="entry name" value="GMP synthase [glutamine-hydrolyzing]"/>
    <property type="match status" value="1"/>
</dbReference>
<dbReference type="FunFam" id="3.40.50.620:FF:000001">
    <property type="entry name" value="GMP synthase [glutamine-hydrolyzing]"/>
    <property type="match status" value="1"/>
</dbReference>
<dbReference type="FunFam" id="3.40.50.880:FF:000001">
    <property type="entry name" value="GMP synthase [glutamine-hydrolyzing]"/>
    <property type="match status" value="1"/>
</dbReference>
<dbReference type="Gene3D" id="3.30.300.10">
    <property type="match status" value="1"/>
</dbReference>
<dbReference type="Gene3D" id="3.40.50.880">
    <property type="match status" value="1"/>
</dbReference>
<dbReference type="Gene3D" id="3.40.50.620">
    <property type="entry name" value="HUPs"/>
    <property type="match status" value="1"/>
</dbReference>
<dbReference type="HAMAP" id="MF_00344">
    <property type="entry name" value="GMP_synthase"/>
    <property type="match status" value="1"/>
</dbReference>
<dbReference type="InterPro" id="IPR029062">
    <property type="entry name" value="Class_I_gatase-like"/>
</dbReference>
<dbReference type="InterPro" id="IPR017926">
    <property type="entry name" value="GATASE"/>
</dbReference>
<dbReference type="InterPro" id="IPR001674">
    <property type="entry name" value="GMP_synth_C"/>
</dbReference>
<dbReference type="InterPro" id="IPR004739">
    <property type="entry name" value="GMP_synth_GATase"/>
</dbReference>
<dbReference type="InterPro" id="IPR022955">
    <property type="entry name" value="GMP_synthase"/>
</dbReference>
<dbReference type="InterPro" id="IPR025777">
    <property type="entry name" value="GMPS_ATP_PPase_dom"/>
</dbReference>
<dbReference type="InterPro" id="IPR022310">
    <property type="entry name" value="NAD/GMP_synthase"/>
</dbReference>
<dbReference type="InterPro" id="IPR014729">
    <property type="entry name" value="Rossmann-like_a/b/a_fold"/>
</dbReference>
<dbReference type="NCBIfam" id="TIGR00884">
    <property type="entry name" value="guaA_Cterm"/>
    <property type="match status" value="1"/>
</dbReference>
<dbReference type="NCBIfam" id="TIGR00888">
    <property type="entry name" value="guaA_Nterm"/>
    <property type="match status" value="1"/>
</dbReference>
<dbReference type="NCBIfam" id="NF000848">
    <property type="entry name" value="PRK00074.1"/>
    <property type="match status" value="1"/>
</dbReference>
<dbReference type="PANTHER" id="PTHR11922:SF2">
    <property type="entry name" value="GMP SYNTHASE [GLUTAMINE-HYDROLYZING]"/>
    <property type="match status" value="1"/>
</dbReference>
<dbReference type="PANTHER" id="PTHR11922">
    <property type="entry name" value="GMP SYNTHASE-RELATED"/>
    <property type="match status" value="1"/>
</dbReference>
<dbReference type="Pfam" id="PF00117">
    <property type="entry name" value="GATase"/>
    <property type="match status" value="1"/>
</dbReference>
<dbReference type="Pfam" id="PF00958">
    <property type="entry name" value="GMP_synt_C"/>
    <property type="match status" value="1"/>
</dbReference>
<dbReference type="Pfam" id="PF02540">
    <property type="entry name" value="NAD_synthase"/>
    <property type="match status" value="1"/>
</dbReference>
<dbReference type="PRINTS" id="PR00097">
    <property type="entry name" value="ANTSNTHASEII"/>
</dbReference>
<dbReference type="PRINTS" id="PR00099">
    <property type="entry name" value="CPSGATASE"/>
</dbReference>
<dbReference type="PRINTS" id="PR00096">
    <property type="entry name" value="GATASE"/>
</dbReference>
<dbReference type="SUPFAM" id="SSF52402">
    <property type="entry name" value="Adenine nucleotide alpha hydrolases-like"/>
    <property type="match status" value="1"/>
</dbReference>
<dbReference type="SUPFAM" id="SSF52317">
    <property type="entry name" value="Class I glutamine amidotransferase-like"/>
    <property type="match status" value="1"/>
</dbReference>
<dbReference type="SUPFAM" id="SSF54810">
    <property type="entry name" value="GMP synthetase C-terminal dimerisation domain"/>
    <property type="match status" value="1"/>
</dbReference>
<dbReference type="PROSITE" id="PS51273">
    <property type="entry name" value="GATASE_TYPE_1"/>
    <property type="match status" value="1"/>
</dbReference>
<dbReference type="PROSITE" id="PS51553">
    <property type="entry name" value="GMPS_ATP_PPASE"/>
    <property type="match status" value="1"/>
</dbReference>
<evidence type="ECO:0000255" key="1">
    <source>
        <dbReference type="HAMAP-Rule" id="MF_00344"/>
    </source>
</evidence>